<keyword id="KW-0158">Chromosome</keyword>
<keyword id="KW-0903">Direct protein sequencing</keyword>
<keyword id="KW-0238">DNA-binding</keyword>
<keyword id="KW-0544">Nucleosome core</keyword>
<keyword id="KW-0539">Nucleus</keyword>
<proteinExistence type="evidence at protein level"/>
<sequence>MISSANNKGAGTSRRKLRSEKAALQFSVSRVEYSLKKGRYCRRLGATAPVYLAAVLENLVAEVLEMAANVTEKHKRIVIKPRHIMLAVRNDVEVNKLFHGVTISASGVVPKTRKELDRRKRRSTSQAD</sequence>
<organism>
    <name type="scientific">Lilium longiflorum</name>
    <name type="common">Trumpet lily</name>
    <dbReference type="NCBI Taxonomy" id="4690"/>
    <lineage>
        <taxon>Eukaryota</taxon>
        <taxon>Viridiplantae</taxon>
        <taxon>Streptophyta</taxon>
        <taxon>Embryophyta</taxon>
        <taxon>Tracheophyta</taxon>
        <taxon>Spermatophyta</taxon>
        <taxon>Magnoliopsida</taxon>
        <taxon>Liliopsida</taxon>
        <taxon>Liliales</taxon>
        <taxon>Liliaceae</taxon>
        <taxon>Lilium</taxon>
    </lineage>
</organism>
<comment type="function">
    <text>Core component of nucleosome. Nucleosomes wrap and compact DNA into chromatin, limiting DNA accessibility to the cellular machineries which require DNA as a template. Histones thereby play a central role in transcription regulation, DNA repair, DNA replication and chromosomal stability. DNA accessibility is regulated via a complex set of post-translational modifications of histones, also called histone code, and nucleosome remodeling. May be involved in the repression of gene expression in male gametes.</text>
</comment>
<comment type="subunit">
    <text>The nucleosome is a histone octamer containing two molecules each of H2A, H2B, H3 and H4 assembled in one H3-H4 heterotetramer and two H2A-H2B heterodimers. The octamer wraps approximately 147 bp of DNA.</text>
</comment>
<comment type="subcellular location">
    <subcellularLocation>
        <location evidence="1">Nucleus</location>
    </subcellularLocation>
    <subcellularLocation>
        <location evidence="1">Chromosome</location>
    </subcellularLocation>
</comment>
<comment type="tissue specificity">
    <text evidence="2 3">Expressed in the generative cell within the bicellular pollen. Not detected in other reproductive or vegetative tissues.</text>
</comment>
<comment type="developmental stage">
    <text evidence="2 3">Associated with the differentiation of male gametic cells during pollen maturation.</text>
</comment>
<comment type="similarity">
    <text evidence="4">Belongs to the histone H2A family.</text>
</comment>
<reference key="1">
    <citation type="journal article" date="2000" name="Chromosoma">
        <title>Unusual core histones specifically expressed in male gametic cells of Lilium longiflorum.</title>
        <authorList>
            <person name="Ueda K."/>
            <person name="Kinoshita Y."/>
            <person name="Xu Z.-J."/>
            <person name="Ide N."/>
            <person name="Ono M."/>
            <person name="Akahori Y."/>
            <person name="Tanaka I."/>
            <person name="Inoue M."/>
        </authorList>
    </citation>
    <scope>NUCLEOTIDE SEQUENCE [MRNA]</scope>
    <scope>TISSUE SPECIFICITY</scope>
    <scope>DEVELOPMENTAL STAGE</scope>
    <source>
        <strain>cv. Georgia</strain>
        <tissue>Pollen</tissue>
    </source>
</reference>
<reference key="2">
    <citation type="journal article" date="2005" name="Plant Mol. Biol.">
        <title>Male gametic cell-specific histone gH2A gene of Lilium longiflorum: genomic structure and promoter activity in the generative cell.</title>
        <authorList>
            <person name="Ueda K."/>
            <person name="Suzuki M."/>
            <person name="Ono M."/>
            <person name="Ide N."/>
            <person name="Tanaka I."/>
            <person name="Inoue M."/>
        </authorList>
    </citation>
    <scope>NUCLEOTIDE SEQUENCE [GENOMIC DNA]</scope>
    <scope>PROTEIN SEQUENCE OF 1-12</scope>
    <scope>TISSUE SPECIFICITY</scope>
    <scope>DEVELOPMENTAL STAGE</scope>
    <source>
        <strain>cv. Georgia</strain>
        <tissue>Leaf</tissue>
    </source>
</reference>
<name>H2A2_LILLO</name>
<dbReference type="EMBL" id="AB003781">
    <property type="protein sequence ID" value="BAA96096.1"/>
    <property type="molecule type" value="mRNA"/>
</dbReference>
<dbReference type="EMBL" id="AB003782">
    <property type="protein sequence ID" value="BAA96097.1"/>
    <property type="molecule type" value="mRNA"/>
</dbReference>
<dbReference type="EMBL" id="AB175889">
    <property type="protein sequence ID" value="BAE47493.1"/>
    <property type="molecule type" value="Genomic_DNA"/>
</dbReference>
<dbReference type="SMR" id="Q9LD75"/>
<dbReference type="GO" id="GO:0000786">
    <property type="term" value="C:nucleosome"/>
    <property type="evidence" value="ECO:0007669"/>
    <property type="project" value="UniProtKB-KW"/>
</dbReference>
<dbReference type="GO" id="GO:0005634">
    <property type="term" value="C:nucleus"/>
    <property type="evidence" value="ECO:0007669"/>
    <property type="project" value="UniProtKB-SubCell"/>
</dbReference>
<dbReference type="GO" id="GO:0003677">
    <property type="term" value="F:DNA binding"/>
    <property type="evidence" value="ECO:0007669"/>
    <property type="project" value="UniProtKB-KW"/>
</dbReference>
<dbReference type="GO" id="GO:0046982">
    <property type="term" value="F:protein heterodimerization activity"/>
    <property type="evidence" value="ECO:0007669"/>
    <property type="project" value="InterPro"/>
</dbReference>
<dbReference type="GO" id="GO:0030527">
    <property type="term" value="F:structural constituent of chromatin"/>
    <property type="evidence" value="ECO:0007669"/>
    <property type="project" value="InterPro"/>
</dbReference>
<dbReference type="CDD" id="cd00074">
    <property type="entry name" value="HFD_H2A"/>
    <property type="match status" value="1"/>
</dbReference>
<dbReference type="Gene3D" id="1.10.20.10">
    <property type="entry name" value="Histone, subunit A"/>
    <property type="match status" value="1"/>
</dbReference>
<dbReference type="InterPro" id="IPR009072">
    <property type="entry name" value="Histone-fold"/>
</dbReference>
<dbReference type="InterPro" id="IPR002119">
    <property type="entry name" value="Histone_H2A"/>
</dbReference>
<dbReference type="InterPro" id="IPR007125">
    <property type="entry name" value="Histone_H2A/H2B/H3"/>
</dbReference>
<dbReference type="InterPro" id="IPR032454">
    <property type="entry name" value="Histone_H2A_C"/>
</dbReference>
<dbReference type="PANTHER" id="PTHR23430">
    <property type="entry name" value="HISTONE H2A"/>
    <property type="match status" value="1"/>
</dbReference>
<dbReference type="Pfam" id="PF00125">
    <property type="entry name" value="Histone"/>
    <property type="match status" value="1"/>
</dbReference>
<dbReference type="Pfam" id="PF16211">
    <property type="entry name" value="Histone_H2A_C"/>
    <property type="match status" value="1"/>
</dbReference>
<dbReference type="PRINTS" id="PR00620">
    <property type="entry name" value="HISTONEH2A"/>
</dbReference>
<dbReference type="SMART" id="SM00414">
    <property type="entry name" value="H2A"/>
    <property type="match status" value="1"/>
</dbReference>
<dbReference type="SUPFAM" id="SSF47113">
    <property type="entry name" value="Histone-fold"/>
    <property type="match status" value="1"/>
</dbReference>
<accession>Q9LD75</accession>
<protein>
    <recommendedName>
        <fullName>Histone H2A.2</fullName>
    </recommendedName>
    <alternativeName>
        <fullName>GH2A</fullName>
    </alternativeName>
</protein>
<evidence type="ECO:0000250" key="1"/>
<evidence type="ECO:0000269" key="2">
    <source>
    </source>
</evidence>
<evidence type="ECO:0000269" key="3">
    <source>
    </source>
</evidence>
<evidence type="ECO:0000305" key="4"/>
<feature type="chain" id="PRO_0000240654" description="Histone H2A.2">
    <location>
        <begin position="1"/>
        <end position="128"/>
    </location>
</feature>
<gene>
    <name type="primary">gH2A</name>
</gene>